<gene>
    <name evidence="6" type="primary">PETs</name>
    <name evidence="6" type="synonym">EFTS</name>
    <name evidence="6" type="synonym">PSRP-7</name>
    <name evidence="10" type="ORF">CHLRE_12g519180v5</name>
    <name evidence="9" type="ORF">CHLREDRAFT_195617</name>
</gene>
<accession>A8J637</accession>
<accession>Q5QEB2</accession>
<keyword id="KW-0025">Alternative splicing</keyword>
<keyword id="KW-0150">Chloroplast</keyword>
<keyword id="KW-0903">Direct protein sequencing</keyword>
<keyword id="KW-0251">Elongation factor</keyword>
<keyword id="KW-0934">Plastid</keyword>
<keyword id="KW-0648">Protein biosynthesis</keyword>
<keyword id="KW-1185">Reference proteome</keyword>
<keyword id="KW-0677">Repeat</keyword>
<keyword id="KW-0809">Transit peptide</keyword>
<reference key="1">
    <citation type="journal article" date="2004" name="Plant Cell">
        <title>Chloroplast elongation factor ts pro-protein is an evolutionarily conserved fusion with the s1 domain-containing plastid-specific ribosomal protein-7.</title>
        <authorList>
            <person name="Beligni M.V."/>
            <person name="Yamaguchi K."/>
            <person name="Mayfield S.P."/>
        </authorList>
    </citation>
    <scope>NUCLEOTIDE SEQUENCE [MRNA] (ISOFORMS 1; 2 AND 3)</scope>
    <scope>FUNCTION</scope>
    <scope>PROTEIN SEQUENCE OF 44-48</scope>
    <scope>ALTERNATIVE SPLICING</scope>
    <scope>SUBCELLULAR LOCATION</scope>
    <scope>SUBUNIT</scope>
    <scope>TISSUE SPECIFICITY</scope>
    <scope>INDUCTION BY LIGHT</scope>
    <scope>GENE FAMILY</scope>
    <source>
        <strain>137c / CC-125</strain>
    </source>
</reference>
<reference key="2">
    <citation type="journal article" date="2007" name="Science">
        <title>The Chlamydomonas genome reveals the evolution of key animal and plant functions.</title>
        <authorList>
            <person name="Merchant S.S."/>
            <person name="Prochnik S.E."/>
            <person name="Vallon O."/>
            <person name="Harris E.H."/>
            <person name="Karpowicz S.J."/>
            <person name="Witman G.B."/>
            <person name="Terry A."/>
            <person name="Salamov A."/>
            <person name="Fritz-Laylin L.K."/>
            <person name="Marechal-Drouard L."/>
            <person name="Marshall W.F."/>
            <person name="Qu L.H."/>
            <person name="Nelson D.R."/>
            <person name="Sanderfoot A.A."/>
            <person name="Spalding M.H."/>
            <person name="Kapitonov V.V."/>
            <person name="Ren Q."/>
            <person name="Ferris P."/>
            <person name="Lindquist E."/>
            <person name="Shapiro H."/>
            <person name="Lucas S.M."/>
            <person name="Grimwood J."/>
            <person name="Schmutz J."/>
            <person name="Cardol P."/>
            <person name="Cerutti H."/>
            <person name="Chanfreau G."/>
            <person name="Chen C.L."/>
            <person name="Cognat V."/>
            <person name="Croft M.T."/>
            <person name="Dent R."/>
            <person name="Dutcher S."/>
            <person name="Fernandez E."/>
            <person name="Fukuzawa H."/>
            <person name="Gonzalez-Ballester D."/>
            <person name="Gonzalez-Halphen D."/>
            <person name="Hallmann A."/>
            <person name="Hanikenne M."/>
            <person name="Hippler M."/>
            <person name="Inwood W."/>
            <person name="Jabbari K."/>
            <person name="Kalanon M."/>
            <person name="Kuras R."/>
            <person name="Lefebvre P.A."/>
            <person name="Lemaire S.D."/>
            <person name="Lobanov A.V."/>
            <person name="Lohr M."/>
            <person name="Manuell A."/>
            <person name="Meier I."/>
            <person name="Mets L."/>
            <person name="Mittag M."/>
            <person name="Mittelmeier T."/>
            <person name="Moroney J.V."/>
            <person name="Moseley J."/>
            <person name="Napoli C."/>
            <person name="Nedelcu A.M."/>
            <person name="Niyogi K."/>
            <person name="Novoselov S.V."/>
            <person name="Paulsen I.T."/>
            <person name="Pazour G.J."/>
            <person name="Purton S."/>
            <person name="Ral J.P."/>
            <person name="Riano-Pachon D.M."/>
            <person name="Riekhof W."/>
            <person name="Rymarquis L."/>
            <person name="Schroda M."/>
            <person name="Stern D."/>
            <person name="Umen J."/>
            <person name="Willows R."/>
            <person name="Wilson N."/>
            <person name="Zimmer S.L."/>
            <person name="Allmer J."/>
            <person name="Balk J."/>
            <person name="Bisova K."/>
            <person name="Chen C.J."/>
            <person name="Elias M."/>
            <person name="Gendler K."/>
            <person name="Hauser C."/>
            <person name="Lamb M.R."/>
            <person name="Ledford H."/>
            <person name="Long J.C."/>
            <person name="Minagawa J."/>
            <person name="Page M.D."/>
            <person name="Pan J."/>
            <person name="Pootakham W."/>
            <person name="Roje S."/>
            <person name="Rose A."/>
            <person name="Stahlberg E."/>
            <person name="Terauchi A.M."/>
            <person name="Yang P."/>
            <person name="Ball S."/>
            <person name="Bowler C."/>
            <person name="Dieckmann C.L."/>
            <person name="Gladyshev V.N."/>
            <person name="Green P."/>
            <person name="Jorgensen R."/>
            <person name="Mayfield S."/>
            <person name="Mueller-Roeber B."/>
            <person name="Rajamani S."/>
            <person name="Sayre R.T."/>
            <person name="Brokstein P."/>
            <person name="Dubchak I."/>
            <person name="Goodstein D."/>
            <person name="Hornick L."/>
            <person name="Huang Y.W."/>
            <person name="Jhaveri J."/>
            <person name="Luo Y."/>
            <person name="Martinez D."/>
            <person name="Ngau W.C."/>
            <person name="Otillar B."/>
            <person name="Poliakov A."/>
            <person name="Porter A."/>
            <person name="Szajkowski L."/>
            <person name="Werner G."/>
            <person name="Zhou K."/>
            <person name="Grigoriev I.V."/>
            <person name="Rokhsar D.S."/>
            <person name="Grossman A.R."/>
        </authorList>
    </citation>
    <scope>NUCLEOTIDE SEQUENCE [LARGE SCALE GENOMIC DNA]</scope>
    <source>
        <strain>CC-503</strain>
    </source>
</reference>
<reference key="3">
    <citation type="journal article" date="2002" name="Plant Cell">
        <title>Proteomic characterization of the small subunit of Chlamydomonas reinhardtii chloroplast ribosome: identification of a novel S1 domain-containing protein and unusually large orthologs of bacterial S2, S3, and S5.</title>
        <authorList>
            <person name="Yamaguchi K."/>
            <person name="Prieto S."/>
            <person name="Beligni M.V."/>
            <person name="Haynes P.A."/>
            <person name="McDonald W.H."/>
            <person name="Yates J.R. III"/>
            <person name="Mayfield S.P."/>
        </authorList>
    </citation>
    <scope>IDENTIFICATION BY MASS SPECTROMETRY</scope>
    <scope>SUBUNIT</scope>
    <scope>SUBCELLULAR LOCATION</scope>
    <source>
        <strain>Arg7/cw15</strain>
    </source>
</reference>
<reference key="4">
    <citation type="journal article" date="2003" name="J. Biol. Chem.">
        <title>Proteomic characterization of the Chlamydomonas reinhardtii chloroplast ribosome. Identification of proteins unique to the 70S ribosome.</title>
        <authorList>
            <person name="Yamaguchi K."/>
            <person name="Beligni M.V."/>
            <person name="Prieto S."/>
            <person name="Haynes P.A."/>
            <person name="McDonald W.H."/>
            <person name="Yates J.R. III"/>
            <person name="Mayfield S.P."/>
        </authorList>
    </citation>
    <scope>REVIEW ON CHLOROPLAST RIBOSOME SUBUNITS</scope>
</reference>
<comment type="function">
    <molecule>Elongation factor Ts, chloroplastic</molecule>
    <text evidence="4">Associates with the EF-Tu.GDP complex and induces the exchange of GDP to GTP (PubMed:15548736). It remains bound to the aminoacyl-tRNA.EF-Tu.GTP complex up to the GTP hydrolysis stage on the ribosome (PubMed:15548736).</text>
</comment>
<comment type="function">
    <molecule>Plastid-specific ribosomal protein-7, chloroplastic</molecule>
    <text evidence="4">Binds to psbD and psbA mRNAs 5'-untranslated regions (UTRs) in vitro.</text>
</comment>
<comment type="subunit">
    <molecule>Plastid-specific ribosomal protein-7, chloroplastic</molecule>
    <text evidence="3 4">Component of the chloroplast ribosome 30S and 70S subunits, as well as polysomes.</text>
</comment>
<comment type="subunit">
    <molecule>Polyprotein of EF-Ts, chloroplastic</molecule>
    <text evidence="4">Component of the chloroplast ribosome 70S subunit, and at low levels, present in polysomes.</text>
</comment>
<comment type="subunit">
    <molecule>Elongation factor Ts, chloroplastic</molecule>
    <text evidence="4">Associates transiently with chloroplast polysomes.</text>
</comment>
<comment type="subcellular location">
    <subcellularLocation>
        <location evidence="3 4">Plastid</location>
        <location evidence="3 4">Chloroplast</location>
    </subcellularLocation>
</comment>
<comment type="alternative products">
    <event type="alternative splicing"/>
    <isoform>
        <id>A8J637-1</id>
        <name>1</name>
        <name evidence="6">110 kDa pro-protein</name>
        <sequence type="displayed"/>
    </isoform>
    <isoform>
        <id>A8J637-2</id>
        <name>2</name>
        <name evidence="6">79 kDa protein PSRP-7</name>
        <sequence type="described" ref="VSP_060529 VSP_060530"/>
    </isoform>
    <isoform>
        <id>A8J637-3</id>
        <name>3</name>
        <name evidence="6">61 kDa protein PSRP-7</name>
        <sequence type="described" ref="VSP_060527 VSP_060528"/>
    </isoform>
</comment>
<comment type="induction">
    <molecule>Polyprotein of EF-Ts, chloroplastic</molecule>
    <text evidence="4">Visible only at the end of the dark period, in 12 hours light/ 12 hours dark conditions (at protein level) (PubMed:15548736). Induced transiently upon shifting to light; mostly expressed after shifting to light, to a lower extent at the end of the dark period and under continuous light, and at low levels at the end of the light period (PubMed:15548736).</text>
</comment>
<comment type="induction">
    <molecule>Isoform 2</molecule>
    <text evidence="4">Induced transiently upon shifting to light; mostly expressed after shifting to light, tand at low levels at the end of the light and dark periods and under continuous light.</text>
</comment>
<comment type="induction">
    <molecule>Isoform 3</molecule>
    <text evidence="4">Induced transiently upon shifting to light; mostly expressed after shifting to light, to a lower extent at the end of the dark period and under continuous light, and at low levels at the end of the light period.</text>
</comment>
<comment type="induction">
    <molecule>Plastid-specific ribosomal protein-7, chloroplastic</molecule>
    <text evidence="4">Expressed constitutively in both continuous light, and 12 hours light/ 12 hours dark conditions (at protein level).</text>
</comment>
<comment type="induction">
    <molecule>Elongation factor Ts, chloroplastic</molecule>
    <text evidence="4">Expressed constitutively in both continuous light, and 12 hours light/ 12 hours dark conditions (at protein level).</text>
</comment>
<comment type="miscellaneous">
    <molecule>Plastid-specific ribosomal protein-7, chloroplastic</molecule>
    <text evidence="4">65 kDa protein PSRP-7 is the major form.</text>
</comment>
<comment type="similarity">
    <molecule>Elongation factor Ts, chloroplastic</molecule>
    <text evidence="7">Belongs to the EF-Ts family.</text>
</comment>
<protein>
    <recommendedName>
        <fullName evidence="6">Polyprotein of EF-Ts, chloroplastic</fullName>
        <shortName evidence="6">110 kDa pro-protein</shortName>
    </recommendedName>
    <component>
        <recommendedName>
            <fullName evidence="6">Plastid-specific ribosomal protein-7, chloroplastic</fullName>
            <shortName evidence="6">65 kDa protein PSRP-7</shortName>
            <shortName evidence="5">CrePSRP-7</shortName>
        </recommendedName>
    </component>
    <component>
        <recommendedName>
            <fullName evidence="6">Elongation factor Ts, chloroplastic</fullName>
            <shortName evidence="6">55 kDa protein EF-Ts</shortName>
            <shortName evidence="6">EF-Ts</shortName>
        </recommendedName>
    </component>
</protein>
<evidence type="ECO:0000255" key="1">
    <source>
        <dbReference type="PROSITE-ProRule" id="PRU00180"/>
    </source>
</evidence>
<evidence type="ECO:0000256" key="2">
    <source>
        <dbReference type="SAM" id="MobiDB-lite"/>
    </source>
</evidence>
<evidence type="ECO:0000269" key="3">
    <source>
    </source>
</evidence>
<evidence type="ECO:0000269" key="4">
    <source>
    </source>
</evidence>
<evidence type="ECO:0000303" key="5">
    <source>
    </source>
</evidence>
<evidence type="ECO:0000303" key="6">
    <source>
    </source>
</evidence>
<evidence type="ECO:0000305" key="7"/>
<evidence type="ECO:0000305" key="8">
    <source>
    </source>
</evidence>
<evidence type="ECO:0000312" key="9">
    <source>
        <dbReference type="EMBL" id="EDP00635.1"/>
    </source>
</evidence>
<evidence type="ECO:0000312" key="10">
    <source>
        <dbReference type="EMBL" id="PNW75255.1"/>
    </source>
</evidence>
<proteinExistence type="evidence at protein level"/>
<name>PETS_CHLRE</name>
<feature type="transit peptide" description="Chloroplast" evidence="4">
    <location>
        <begin position="1"/>
        <end position="43"/>
    </location>
</feature>
<feature type="chain" id="PRO_0000449219" description="Polyprotein of EF-Ts, chloroplastic">
    <location>
        <begin position="44"/>
        <end position="1013"/>
    </location>
</feature>
<feature type="chain" id="PRO_0000449220" description="Plastid-specific ribosomal protein-7, chloroplastic">
    <location>
        <begin position="44"/>
        <end position="559"/>
    </location>
</feature>
<feature type="chain" id="PRO_0000449221" description="Elongation factor Ts, chloroplastic">
    <location>
        <begin position="560"/>
        <end position="1013"/>
    </location>
</feature>
<feature type="domain" description="S1 motif 1" evidence="1">
    <location>
        <begin position="64"/>
        <end position="133"/>
    </location>
</feature>
<feature type="domain" description="S1 motif 2" evidence="1">
    <location>
        <begin position="227"/>
        <end position="331"/>
    </location>
</feature>
<feature type="region of interest" description="Disordered" evidence="2">
    <location>
        <begin position="141"/>
        <end position="163"/>
    </location>
</feature>
<feature type="region of interest" description="Disordered" evidence="2">
    <location>
        <begin position="772"/>
        <end position="798"/>
    </location>
</feature>
<feature type="compositionally biased region" description="Acidic residues" evidence="2">
    <location>
        <begin position="141"/>
        <end position="150"/>
    </location>
</feature>
<feature type="compositionally biased region" description="Basic and acidic residues" evidence="2">
    <location>
        <begin position="781"/>
        <end position="793"/>
    </location>
</feature>
<feature type="splice variant" id="VSP_060527" description="In isoform 3." evidence="8">
    <original>NI</original>
    <variation>SQ</variation>
    <location>
        <begin position="559"/>
        <end position="560"/>
    </location>
</feature>
<feature type="splice variant" id="VSP_060528" description="In isoform 3." evidence="8">
    <location>
        <begin position="561"/>
        <end position="1013"/>
    </location>
</feature>
<feature type="splice variant" id="VSP_060529" description="In isoform 2." evidence="8">
    <original>WLRKKGLS</original>
    <variation>VGKRAGFF</variation>
    <location>
        <begin position="596"/>
        <end position="603"/>
    </location>
</feature>
<feature type="splice variant" id="VSP_060530" description="In isoform 2." evidence="8">
    <location>
        <begin position="604"/>
        <end position="1013"/>
    </location>
</feature>
<feature type="sequence conflict" description="In Ref. 1; AAU93598." evidence="7" ref="1">
    <original>E</original>
    <variation>K</variation>
    <location>
        <position position="334"/>
    </location>
</feature>
<organism>
    <name type="scientific">Chlamydomonas reinhardtii</name>
    <name type="common">Chlamydomonas smithii</name>
    <dbReference type="NCBI Taxonomy" id="3055"/>
    <lineage>
        <taxon>Eukaryota</taxon>
        <taxon>Viridiplantae</taxon>
        <taxon>Chlorophyta</taxon>
        <taxon>core chlorophytes</taxon>
        <taxon>Chlorophyceae</taxon>
        <taxon>CS clade</taxon>
        <taxon>Chlamydomonadales</taxon>
        <taxon>Chlamydomonadaceae</taxon>
        <taxon>Chlamydomonas</taxon>
    </lineage>
</organism>
<sequence>MLRELGRTATVKAHGRSVLRPVRGPAGRRQVAFTGVRPSVRVFAEAPAAEQAAKAIKLEDVKEGSEYEGTVTTVEEFGAFVNFGANTNGLVHISKLASGFTKNAKDVVQPGQKVTVKVLSVDAEKKRVSLELKSAVAAEASAEESDDIITEPDREGADATDDDEDVEVELEDGQVEVRADLPGFEDIPFVMEEADMDAEMSEAAIAALEADLDGAEIRYELEAPAYMEEVTGKVARIEDYGVFLEFEWNGKTLTGLLAKDEMKVPSSALSAEAQAALRAEWADTGFEMPAFVELPDDELDVKKYYQPGESVPAFVLESSLVDGRGISLTHFTDEEVSAEAVAAYEELEDDEDEELDKMMADAAGLEDEVLAFDPEALMEEDEGEEAGAAADAGDDAEYEGVSADGLEGANGNYALGATRSGLIKGKNGYQVAPMGLPSRPLNDAVTSSGLAILGTSEVDFDGDEVQLVDYWTSEAFDNIPKDVLKKLGLKMSYTEAGEAEFEERADFEATDVPFYLYGGDVESRAKEFVADLLSDDVDEAELPARAGRAPIVLAAAVQNISAAEVKALREKTGAGMMDCKKALAECAGDAEAAAEWLRKKGLSGADKKAGRIAAEGAVARYIHPGSRLGVLLEVNCETDFVAASEKFQALVNELGMIIAATDCICVSPEDVPEEVLAKEREVEMGKEDLANKPEAIRAKIVEGRLQKMRDQVALTNQATLSNPDKTVAELVKETIAAVGENVKIRRFIKYRLGEGLEKKANDFAAEVAQQTQAKAAAPAAPKKEEPKKEEPKKATVAVSAGTVKELRDKTGAGMMDCKKALAENENDMEKATEWLRMKGLAGADKKAGRIAAEGVVASYIHPGSRLGVLLEVNCETDFVAASEKFNELVNYIAMGIVAGQNVQYVSADEIPAEVFEREKQLEMARDDLKGKPDAIRAKIAEGRAKKIATEMCLLDQPFLTDPSKTVAEAIKESIAAIGEKISVRRFVKFQLGEGLEKKSNDFAAEVAAATGAK</sequence>
<dbReference type="EMBL" id="AY661459">
    <property type="protein sequence ID" value="AAU93598.1"/>
    <property type="molecule type" value="mRNA"/>
</dbReference>
<dbReference type="EMBL" id="CM008973">
    <property type="protein sequence ID" value="PNW75255.1"/>
    <property type="molecule type" value="Genomic_DNA"/>
</dbReference>
<dbReference type="EMBL" id="DS496138">
    <property type="protein sequence ID" value="EDP00635.1"/>
    <property type="molecule type" value="Genomic_DNA"/>
</dbReference>
<dbReference type="RefSeq" id="XP_001696942.1">
    <property type="nucleotide sequence ID" value="XM_001696890.1"/>
</dbReference>
<dbReference type="RefSeq" id="XP_001696943.1">
    <molecule id="A8J637-1"/>
    <property type="nucleotide sequence ID" value="XM_001696891.1"/>
</dbReference>
<dbReference type="SMR" id="A8J637"/>
<dbReference type="FunCoup" id="A8J637">
    <property type="interactions" value="679"/>
</dbReference>
<dbReference type="STRING" id="3055.A8J637"/>
<dbReference type="PaxDb" id="3055-EDP00635"/>
<dbReference type="ProMEX" id="A8J637"/>
<dbReference type="EnsemblPlants" id="PNW75255">
    <molecule id="A8J637-1"/>
    <property type="protein sequence ID" value="PNW75255"/>
    <property type="gene ID" value="CHLRE_12g519180v5"/>
</dbReference>
<dbReference type="GeneID" id="5722614"/>
<dbReference type="Gramene" id="PNW75255">
    <molecule id="A8J637-1"/>
    <property type="protein sequence ID" value="PNW75255"/>
    <property type="gene ID" value="CHLRE_12g519180v5"/>
</dbReference>
<dbReference type="KEGG" id="cre:CHLRE_12g519180v5"/>
<dbReference type="eggNOG" id="KOG1071">
    <property type="taxonomic scope" value="Eukaryota"/>
</dbReference>
<dbReference type="HOGENOM" id="CLU_012395_0_0_1"/>
<dbReference type="InParanoid" id="A8J637"/>
<dbReference type="OrthoDB" id="277235at2759"/>
<dbReference type="Proteomes" id="UP000006906">
    <property type="component" value="Chromosome 12"/>
</dbReference>
<dbReference type="ExpressionAtlas" id="A8J637">
    <property type="expression patterns" value="baseline"/>
</dbReference>
<dbReference type="GO" id="GO:0009507">
    <property type="term" value="C:chloroplast"/>
    <property type="evidence" value="ECO:0000314"/>
    <property type="project" value="UniProtKB"/>
</dbReference>
<dbReference type="GO" id="GO:0043253">
    <property type="term" value="C:chloroplast ribosome"/>
    <property type="evidence" value="ECO:0000314"/>
    <property type="project" value="UniProtKB"/>
</dbReference>
<dbReference type="GO" id="GO:0005739">
    <property type="term" value="C:mitochondrion"/>
    <property type="evidence" value="ECO:0007669"/>
    <property type="project" value="UniProtKB-UniRule"/>
</dbReference>
<dbReference type="GO" id="GO:0003729">
    <property type="term" value="F:mRNA binding"/>
    <property type="evidence" value="ECO:0000314"/>
    <property type="project" value="UniProtKB"/>
</dbReference>
<dbReference type="GO" id="GO:0003746">
    <property type="term" value="F:translation elongation factor activity"/>
    <property type="evidence" value="ECO:0000318"/>
    <property type="project" value="GO_Central"/>
</dbReference>
<dbReference type="GO" id="GO:0061770">
    <property type="term" value="F:translation elongation factor binding"/>
    <property type="evidence" value="ECO:0000314"/>
    <property type="project" value="UniProtKB"/>
</dbReference>
<dbReference type="GO" id="GO:0070125">
    <property type="term" value="P:mitochondrial translational elongation"/>
    <property type="evidence" value="ECO:0000318"/>
    <property type="project" value="GO_Central"/>
</dbReference>
<dbReference type="GO" id="GO:0009416">
    <property type="term" value="P:response to light stimulus"/>
    <property type="evidence" value="ECO:0000270"/>
    <property type="project" value="UniProtKB"/>
</dbReference>
<dbReference type="CDD" id="cd14275">
    <property type="entry name" value="UBA_EF-Ts"/>
    <property type="match status" value="2"/>
</dbReference>
<dbReference type="FunFam" id="1.10.286.20:FF:000001">
    <property type="entry name" value="Elongation factor Ts"/>
    <property type="match status" value="2"/>
</dbReference>
<dbReference type="FunFam" id="1.10.8.10:FF:000001">
    <property type="entry name" value="Elongation factor Ts"/>
    <property type="match status" value="2"/>
</dbReference>
<dbReference type="FunFam" id="2.40.50.140:FF:000051">
    <property type="entry name" value="RNA-binding transcriptional accessory protein"/>
    <property type="match status" value="1"/>
</dbReference>
<dbReference type="Gene3D" id="1.10.286.20">
    <property type="match status" value="2"/>
</dbReference>
<dbReference type="Gene3D" id="1.10.8.10">
    <property type="entry name" value="DNA helicase RuvA subunit, C-terminal domain"/>
    <property type="match status" value="2"/>
</dbReference>
<dbReference type="Gene3D" id="3.30.479.20">
    <property type="entry name" value="Elongation factor Ts, dimerisation domain"/>
    <property type="match status" value="2"/>
</dbReference>
<dbReference type="Gene3D" id="2.40.50.140">
    <property type="entry name" value="Nucleic acid-binding proteins"/>
    <property type="match status" value="1"/>
</dbReference>
<dbReference type="HAMAP" id="MF_00050">
    <property type="entry name" value="EF_Ts"/>
    <property type="match status" value="2"/>
</dbReference>
<dbReference type="InterPro" id="IPR036402">
    <property type="entry name" value="EF-Ts_dimer_sf"/>
</dbReference>
<dbReference type="InterPro" id="IPR012340">
    <property type="entry name" value="NA-bd_OB-fold"/>
</dbReference>
<dbReference type="InterPro" id="IPR003029">
    <property type="entry name" value="S1_domain"/>
</dbReference>
<dbReference type="InterPro" id="IPR001816">
    <property type="entry name" value="Transl_elong_EFTs/EF1B"/>
</dbReference>
<dbReference type="InterPro" id="IPR014039">
    <property type="entry name" value="Transl_elong_EFTs/EF1B_dimer"/>
</dbReference>
<dbReference type="InterPro" id="IPR018101">
    <property type="entry name" value="Transl_elong_Ts_CS"/>
</dbReference>
<dbReference type="InterPro" id="IPR009060">
    <property type="entry name" value="UBA-like_sf"/>
</dbReference>
<dbReference type="NCBIfam" id="TIGR00116">
    <property type="entry name" value="tsf"/>
    <property type="match status" value="2"/>
</dbReference>
<dbReference type="PANTHER" id="PTHR11741">
    <property type="entry name" value="ELONGATION FACTOR TS"/>
    <property type="match status" value="1"/>
</dbReference>
<dbReference type="PANTHER" id="PTHR11741:SF10">
    <property type="entry name" value="POLYPROTEIN OF EF-TS, CHLOROPLASTIC"/>
    <property type="match status" value="1"/>
</dbReference>
<dbReference type="Pfam" id="PF25025">
    <property type="entry name" value="EF-Ts_N"/>
    <property type="match status" value="1"/>
</dbReference>
<dbReference type="Pfam" id="PF00889">
    <property type="entry name" value="EF_TS"/>
    <property type="match status" value="2"/>
</dbReference>
<dbReference type="Pfam" id="PF00575">
    <property type="entry name" value="S1"/>
    <property type="match status" value="1"/>
</dbReference>
<dbReference type="SMART" id="SM00316">
    <property type="entry name" value="S1"/>
    <property type="match status" value="2"/>
</dbReference>
<dbReference type="SUPFAM" id="SSF54713">
    <property type="entry name" value="Elongation factor Ts (EF-Ts), dimerisation domain"/>
    <property type="match status" value="2"/>
</dbReference>
<dbReference type="SUPFAM" id="SSF50249">
    <property type="entry name" value="Nucleic acid-binding proteins"/>
    <property type="match status" value="1"/>
</dbReference>
<dbReference type="SUPFAM" id="SSF46934">
    <property type="entry name" value="UBA-like"/>
    <property type="match status" value="2"/>
</dbReference>
<dbReference type="PROSITE" id="PS01126">
    <property type="entry name" value="EF_TS_1"/>
    <property type="match status" value="2"/>
</dbReference>
<dbReference type="PROSITE" id="PS01127">
    <property type="entry name" value="EF_TS_2"/>
    <property type="match status" value="2"/>
</dbReference>
<dbReference type="PROSITE" id="PS50126">
    <property type="entry name" value="S1"/>
    <property type="match status" value="1"/>
</dbReference>